<name>RFX2_XENLA</name>
<protein>
    <recommendedName>
        <fullName>DNA-binding protein RFX2</fullName>
    </recommendedName>
    <alternativeName>
        <fullName>Regulatory factor X 2</fullName>
    </alternativeName>
</protein>
<feature type="chain" id="PRO_0000380698" description="DNA-binding protein RFX2">
    <location>
        <begin position="1"/>
        <end position="694"/>
    </location>
</feature>
<feature type="DNA-binding region" description="RFX-type winged-helix" evidence="3">
    <location>
        <begin position="174"/>
        <end position="249"/>
    </location>
</feature>
<feature type="region of interest" description="Disordered" evidence="4">
    <location>
        <begin position="267"/>
        <end position="310"/>
    </location>
</feature>
<feature type="region of interest" description="Disordered" evidence="4">
    <location>
        <begin position="658"/>
        <end position="694"/>
    </location>
</feature>
<feature type="compositionally biased region" description="Polar residues" evidence="4">
    <location>
        <begin position="289"/>
        <end position="299"/>
    </location>
</feature>
<feature type="compositionally biased region" description="Low complexity" evidence="4">
    <location>
        <begin position="300"/>
        <end position="310"/>
    </location>
</feature>
<sequence length="694" mass="77784">MQNSDSGSDSATSVALRTSTSAQAPVVQPVPASQQVQTVQHVYPAQVQYVEGDTVYTNGAIRTAYSYNAETQIYAPSSGSSYFDSQGGGAQVTTVVSSPTAIPSHSMVGITMDVSGSQIISSSGAYLIHGGLENSRHTPSHTSRTFPATLEMAIENLQKNEGITSHKSSLLNSHLQWLLDNYETAEGVSLPRSSLYNHYLRHCQDHKLDPVNAASFGKLIRSVFMGLRTRRLGTRGNSKYHYYGIRLKPDSPLNRIQEDAQYMAIRQQPIHQKQRYRPAQKIDGMGENPANSSQHASPEQSVAAQSQHHQQFIDTSHVFPDFPAPDLGSLLLPEGITMTDIKNLQLMYRRHCEATIDVVMNLQFQYIEKLWQAFWNSKPSSPDGSNPMSSEDEQEPIIPNEKLMVLCKYEPIMRWMRNCDHILYQALVEILIPDVLRPVPSTLTQAIRNFAKSLEGWLTNAMCDFPQQIVHAKVGVVSAFAQTLRRYTSLNHLAQAARAVLQNTSQINQMLSDLNRVDFANVQEQASWVCQCDEGMVQKLEQDFKLTLQQQSSLDQWANWLDNVVTQVLKPHEGSTSFPKAARQFLLKWSFYSSMVIRDLTLRSAASFGSFHLIRLLYDEYMFYLVEHRVAQATGETPIAVMGEFSDFASMSPVQMDKDDVSELGSDTEGDPHISGQPPVKRERVELNHSMQEM</sequence>
<keyword id="KW-0970">Cilium biogenesis/degradation</keyword>
<keyword id="KW-0963">Cytoplasm</keyword>
<keyword id="KW-0238">DNA-binding</keyword>
<keyword id="KW-0539">Nucleus</keyword>
<keyword id="KW-1185">Reference proteome</keyword>
<keyword id="KW-0804">Transcription</keyword>
<keyword id="KW-0805">Transcription regulation</keyword>
<reference key="1">
    <citation type="submission" date="2005-11" db="EMBL/GenBank/DDBJ databases">
        <authorList>
            <consortium name="NIH - Xenopus Gene Collection (XGC) project"/>
        </authorList>
    </citation>
    <scope>NUCLEOTIDE SEQUENCE [LARGE SCALE MRNA]</scope>
    <source>
        <tissue>Testis</tissue>
    </source>
</reference>
<reference key="2">
    <citation type="journal article" date="2012" name="Dev. Biol.">
        <title>RFX2 is broadly required for ciliogenesis during vertebrate development.</title>
        <authorList>
            <person name="Chung M.I."/>
            <person name="Peyrot S.M."/>
            <person name="LeBoeuf S."/>
            <person name="Park T.J."/>
            <person name="McGary K.L."/>
            <person name="Marcotte E.M."/>
            <person name="Wallingford J.B."/>
        </authorList>
    </citation>
    <scope>FUNCTION</scope>
    <scope>TISSUE SPECIFICITY</scope>
</reference>
<reference key="3">
    <citation type="journal article" date="2014" name="Elife">
        <title>Coordinated genomic control of ciliogenesis and cell movement by RFX2.</title>
        <authorList>
            <person name="Chung M.I."/>
            <person name="Kwon T."/>
            <person name="Tu F."/>
            <person name="Brooks E.R."/>
            <person name="Gupta R."/>
            <person name="Meyer M."/>
            <person name="Baker J.C."/>
            <person name="Marcotte E.M."/>
            <person name="Wallingford J.B."/>
        </authorList>
    </citation>
    <scope>FUNCTION</scope>
</reference>
<organism>
    <name type="scientific">Xenopus laevis</name>
    <name type="common">African clawed frog</name>
    <dbReference type="NCBI Taxonomy" id="8355"/>
    <lineage>
        <taxon>Eukaryota</taxon>
        <taxon>Metazoa</taxon>
        <taxon>Chordata</taxon>
        <taxon>Craniata</taxon>
        <taxon>Vertebrata</taxon>
        <taxon>Euteleostomi</taxon>
        <taxon>Amphibia</taxon>
        <taxon>Batrachia</taxon>
        <taxon>Anura</taxon>
        <taxon>Pipoidea</taxon>
        <taxon>Pipidae</taxon>
        <taxon>Xenopodinae</taxon>
        <taxon>Xenopus</taxon>
        <taxon>Xenopus</taxon>
    </lineage>
</organism>
<proteinExistence type="evidence at transcript level"/>
<gene>
    <name type="primary">rfx2</name>
</gene>
<dbReference type="EMBL" id="BC108517">
    <property type="protein sequence ID" value="AAI08518.1"/>
    <property type="molecule type" value="mRNA"/>
</dbReference>
<dbReference type="RefSeq" id="NP_001090132.1">
    <property type="nucleotide sequence ID" value="NM_001096663.1"/>
</dbReference>
<dbReference type="SMR" id="Q32NR3"/>
<dbReference type="DNASU" id="735210"/>
<dbReference type="GeneID" id="735210"/>
<dbReference type="KEGG" id="xla:735210"/>
<dbReference type="AGR" id="Xenbase:XB-GENE-991777"/>
<dbReference type="CTD" id="735210"/>
<dbReference type="Xenbase" id="XB-GENE-991777">
    <property type="gene designation" value="rfx2.S"/>
</dbReference>
<dbReference type="OrthoDB" id="10056949at2759"/>
<dbReference type="Proteomes" id="UP000186698">
    <property type="component" value="Chromosome 1S"/>
</dbReference>
<dbReference type="Bgee" id="735210">
    <property type="expression patterns" value="Expressed in testis and 19 other cell types or tissues"/>
</dbReference>
<dbReference type="GO" id="GO:0005737">
    <property type="term" value="C:cytoplasm"/>
    <property type="evidence" value="ECO:0007669"/>
    <property type="project" value="UniProtKB-SubCell"/>
</dbReference>
<dbReference type="GO" id="GO:0005634">
    <property type="term" value="C:nucleus"/>
    <property type="evidence" value="ECO:0007669"/>
    <property type="project" value="UniProtKB-SubCell"/>
</dbReference>
<dbReference type="GO" id="GO:0003700">
    <property type="term" value="F:DNA-binding transcription factor activity"/>
    <property type="evidence" value="ECO:0000314"/>
    <property type="project" value="UniProtKB"/>
</dbReference>
<dbReference type="GO" id="GO:0000981">
    <property type="term" value="F:DNA-binding transcription factor activity, RNA polymerase II-specific"/>
    <property type="evidence" value="ECO:0000318"/>
    <property type="project" value="GO_Central"/>
</dbReference>
<dbReference type="GO" id="GO:0000978">
    <property type="term" value="F:RNA polymerase II cis-regulatory region sequence-specific DNA binding"/>
    <property type="evidence" value="ECO:0000314"/>
    <property type="project" value="UniProtKB"/>
</dbReference>
<dbReference type="GO" id="GO:0060271">
    <property type="term" value="P:cilium assembly"/>
    <property type="evidence" value="ECO:0000314"/>
    <property type="project" value="UniProtKB"/>
</dbReference>
<dbReference type="GO" id="GO:0001843">
    <property type="term" value="P:neural tube closure"/>
    <property type="evidence" value="ECO:0000315"/>
    <property type="project" value="UniProtKB"/>
</dbReference>
<dbReference type="GO" id="GO:0006357">
    <property type="term" value="P:regulation of transcription by RNA polymerase II"/>
    <property type="evidence" value="ECO:0000314"/>
    <property type="project" value="UniProtKB"/>
</dbReference>
<dbReference type="FunFam" id="1.10.10.10:FF:000017">
    <property type="entry name" value="transcription factor RFX3 isoform X1"/>
    <property type="match status" value="1"/>
</dbReference>
<dbReference type="Gene3D" id="1.10.10.10">
    <property type="entry name" value="Winged helix-like DNA-binding domain superfamily/Winged helix DNA-binding domain"/>
    <property type="match status" value="1"/>
</dbReference>
<dbReference type="InterPro" id="IPR003150">
    <property type="entry name" value="DNA-bd_RFX"/>
</dbReference>
<dbReference type="InterPro" id="IPR039779">
    <property type="entry name" value="RFX-like"/>
</dbReference>
<dbReference type="InterPro" id="IPR007668">
    <property type="entry name" value="RFX1_trans_act"/>
</dbReference>
<dbReference type="InterPro" id="IPR036388">
    <property type="entry name" value="WH-like_DNA-bd_sf"/>
</dbReference>
<dbReference type="InterPro" id="IPR036390">
    <property type="entry name" value="WH_DNA-bd_sf"/>
</dbReference>
<dbReference type="PANTHER" id="PTHR12619:SF17">
    <property type="entry name" value="DNA-BINDING PROTEIN RFX2"/>
    <property type="match status" value="1"/>
</dbReference>
<dbReference type="PANTHER" id="PTHR12619">
    <property type="entry name" value="RFX TRANSCRIPTION FACTOR FAMILY"/>
    <property type="match status" value="1"/>
</dbReference>
<dbReference type="Pfam" id="PF25340">
    <property type="entry name" value="BCD_RFX"/>
    <property type="match status" value="1"/>
</dbReference>
<dbReference type="Pfam" id="PF04589">
    <property type="entry name" value="RFX1_trans_act"/>
    <property type="match status" value="1"/>
</dbReference>
<dbReference type="Pfam" id="PF02257">
    <property type="entry name" value="RFX_DNA_binding"/>
    <property type="match status" value="1"/>
</dbReference>
<dbReference type="SUPFAM" id="SSF46785">
    <property type="entry name" value="Winged helix' DNA-binding domain"/>
    <property type="match status" value="1"/>
</dbReference>
<dbReference type="PROSITE" id="PS51526">
    <property type="entry name" value="RFX_DBD"/>
    <property type="match status" value="1"/>
</dbReference>
<evidence type="ECO:0000250" key="1">
    <source>
        <dbReference type="UniProtKB" id="B2GV50"/>
    </source>
</evidence>
<evidence type="ECO:0000250" key="2">
    <source>
        <dbReference type="UniProtKB" id="P48379"/>
    </source>
</evidence>
<evidence type="ECO:0000255" key="3">
    <source>
        <dbReference type="PROSITE-ProRule" id="PRU00858"/>
    </source>
</evidence>
<evidence type="ECO:0000256" key="4">
    <source>
        <dbReference type="SAM" id="MobiDB-lite"/>
    </source>
</evidence>
<evidence type="ECO:0000269" key="5">
    <source>
    </source>
</evidence>
<evidence type="ECO:0000269" key="6">
    <source>
    </source>
</evidence>
<comment type="function">
    <text evidence="5 6">Transcription factor that acts as a key regulator of ciliogenesis. Specifically regulates expression of genes required for cilium assembly and function. Recognizes and binds the X-box, a regulatory motif with DNA sequence 5'-GTNRCC(0-3N)RGYAAC-3' present on promoters (PubMed:22227339, PubMed:24424412). Required for neural tube closure and neural ciliogenesis (PubMed:22227339).</text>
</comment>
<comment type="subunit">
    <text evidence="2">Homodimer. Heterodimer; heterodimerizes with other rfx proteins.</text>
</comment>
<comment type="subcellular location">
    <subcellularLocation>
        <location evidence="1 3">Nucleus</location>
    </subcellularLocation>
    <subcellularLocation>
        <location evidence="1">Cytoplasm</location>
    </subcellularLocation>
    <text evidence="1">Mainly expressed in the nucleus and at lower level in cytoplasm.</text>
</comment>
<comment type="tissue specificity">
    <text evidence="5">Preferentially expressed in ciliated tissues, such as neural tube, gastrocoel roof plate, epidermal multiciliated cells, otic vesicles and kidneys.</text>
</comment>
<comment type="similarity">
    <text evidence="3">Belongs to the RFX family.</text>
</comment>
<accession>Q32NR3</accession>